<gene>
    <name evidence="1" type="primary">cutA</name>
    <name type="ordered locus">EcolC_3875</name>
</gene>
<accession>B1ITR1</accession>
<feature type="chain" id="PRO_1000085360" description="Divalent-cation tolerance protein CutA">
    <location>
        <begin position="1"/>
        <end position="112"/>
    </location>
</feature>
<feature type="binding site" evidence="1">
    <location>
        <position position="16"/>
    </location>
    <ligand>
        <name>Cu cation</name>
        <dbReference type="ChEBI" id="CHEBI:23378"/>
    </ligand>
</feature>
<feature type="binding site" evidence="1">
    <location>
        <position position="83"/>
    </location>
    <ligand>
        <name>Cu cation</name>
        <dbReference type="ChEBI" id="CHEBI:23378"/>
    </ligand>
</feature>
<feature type="binding site" evidence="1">
    <location>
        <position position="84"/>
    </location>
    <ligand>
        <name>Cu cation</name>
        <dbReference type="ChEBI" id="CHEBI:23378"/>
    </ligand>
</feature>
<proteinExistence type="inferred from homology"/>
<reference key="1">
    <citation type="submission" date="2008-02" db="EMBL/GenBank/DDBJ databases">
        <title>Complete sequence of Escherichia coli C str. ATCC 8739.</title>
        <authorList>
            <person name="Copeland A."/>
            <person name="Lucas S."/>
            <person name="Lapidus A."/>
            <person name="Glavina del Rio T."/>
            <person name="Dalin E."/>
            <person name="Tice H."/>
            <person name="Bruce D."/>
            <person name="Goodwin L."/>
            <person name="Pitluck S."/>
            <person name="Kiss H."/>
            <person name="Brettin T."/>
            <person name="Detter J.C."/>
            <person name="Han C."/>
            <person name="Kuske C.R."/>
            <person name="Schmutz J."/>
            <person name="Larimer F."/>
            <person name="Land M."/>
            <person name="Hauser L."/>
            <person name="Kyrpides N."/>
            <person name="Mikhailova N."/>
            <person name="Ingram L."/>
            <person name="Richardson P."/>
        </authorList>
    </citation>
    <scope>NUCLEOTIDE SEQUENCE [LARGE SCALE GENOMIC DNA]</scope>
    <source>
        <strain>ATCC 8739 / DSM 1576 / NBRC 3972 / NCIMB 8545 / WDCM 00012 / Crooks</strain>
    </source>
</reference>
<keyword id="KW-0186">Copper</keyword>
<keyword id="KW-0963">Cytoplasm</keyword>
<keyword id="KW-0479">Metal-binding</keyword>
<comment type="function">
    <text evidence="1">Involved in resistance toward heavy metals.</text>
</comment>
<comment type="cofactor">
    <cofactor evidence="1">
        <name>Cu cation</name>
        <dbReference type="ChEBI" id="CHEBI:23378"/>
    </cofactor>
    <text evidence="1">Binds 1 copper ion per subunit.</text>
</comment>
<comment type="subunit">
    <text evidence="1">Homotrimer.</text>
</comment>
<comment type="subcellular location">
    <subcellularLocation>
        <location evidence="1">Cytoplasm</location>
    </subcellularLocation>
</comment>
<comment type="similarity">
    <text evidence="1">Belongs to the CutA family.</text>
</comment>
<organism>
    <name type="scientific">Escherichia coli (strain ATCC 8739 / DSM 1576 / NBRC 3972 / NCIMB 8545 / WDCM 00012 / Crooks)</name>
    <dbReference type="NCBI Taxonomy" id="481805"/>
    <lineage>
        <taxon>Bacteria</taxon>
        <taxon>Pseudomonadati</taxon>
        <taxon>Pseudomonadota</taxon>
        <taxon>Gammaproteobacteria</taxon>
        <taxon>Enterobacterales</taxon>
        <taxon>Enterobacteriaceae</taxon>
        <taxon>Escherichia</taxon>
    </lineage>
</organism>
<name>CUTA_ECOLC</name>
<sequence length="112" mass="12331">MLDEKSSNTASVVVLCTAPDEATAQDLAAKVLAEKLAACATLIPGATSLYYWEGKLEQEYEVQMILKTTVSHQQALLECLKSHHPYQTPELLVLPVTHGDTDYLSWLNASLR</sequence>
<evidence type="ECO:0000255" key="1">
    <source>
        <dbReference type="HAMAP-Rule" id="MF_01160"/>
    </source>
</evidence>
<dbReference type="EMBL" id="CP000946">
    <property type="protein sequence ID" value="ACA79479.1"/>
    <property type="molecule type" value="Genomic_DNA"/>
</dbReference>
<dbReference type="RefSeq" id="WP_000883400.1">
    <property type="nucleotide sequence ID" value="NZ_MTFT01000012.1"/>
</dbReference>
<dbReference type="BMRB" id="B1ITR1"/>
<dbReference type="SMR" id="B1ITR1"/>
<dbReference type="GeneID" id="93777687"/>
<dbReference type="KEGG" id="ecl:EcolC_3875"/>
<dbReference type="HOGENOM" id="CLU_098807_3_0_6"/>
<dbReference type="GO" id="GO:0005737">
    <property type="term" value="C:cytoplasm"/>
    <property type="evidence" value="ECO:0007669"/>
    <property type="project" value="UniProtKB-SubCell"/>
</dbReference>
<dbReference type="GO" id="GO:0005507">
    <property type="term" value="F:copper ion binding"/>
    <property type="evidence" value="ECO:0007669"/>
    <property type="project" value="UniProtKB-UniRule"/>
</dbReference>
<dbReference type="GO" id="GO:0010038">
    <property type="term" value="P:response to metal ion"/>
    <property type="evidence" value="ECO:0007669"/>
    <property type="project" value="InterPro"/>
</dbReference>
<dbReference type="FunFam" id="3.30.70.120:FF:000004">
    <property type="entry name" value="Divalent-cation tolerance protein CutA"/>
    <property type="match status" value="1"/>
</dbReference>
<dbReference type="Gene3D" id="3.30.70.120">
    <property type="match status" value="1"/>
</dbReference>
<dbReference type="HAMAP" id="MF_01160">
    <property type="entry name" value="CutA"/>
    <property type="match status" value="1"/>
</dbReference>
<dbReference type="InterPro" id="IPR023700">
    <property type="entry name" value="CutA_Enterobact"/>
</dbReference>
<dbReference type="InterPro" id="IPR004323">
    <property type="entry name" value="Ion_tolerance_CutA"/>
</dbReference>
<dbReference type="InterPro" id="IPR011322">
    <property type="entry name" value="N-reg_PII-like_a/b"/>
</dbReference>
<dbReference type="InterPro" id="IPR015867">
    <property type="entry name" value="N-reg_PII/ATP_PRibTrfase_C"/>
</dbReference>
<dbReference type="NCBIfam" id="NF007930">
    <property type="entry name" value="PRK10645.1"/>
    <property type="match status" value="1"/>
</dbReference>
<dbReference type="PANTHER" id="PTHR23419">
    <property type="entry name" value="DIVALENT CATION TOLERANCE CUTA-RELATED"/>
    <property type="match status" value="1"/>
</dbReference>
<dbReference type="PANTHER" id="PTHR23419:SF8">
    <property type="entry name" value="FI09726P"/>
    <property type="match status" value="1"/>
</dbReference>
<dbReference type="Pfam" id="PF03091">
    <property type="entry name" value="CutA1"/>
    <property type="match status" value="1"/>
</dbReference>
<dbReference type="SUPFAM" id="SSF54913">
    <property type="entry name" value="GlnB-like"/>
    <property type="match status" value="1"/>
</dbReference>
<protein>
    <recommendedName>
        <fullName evidence="1">Divalent-cation tolerance protein CutA</fullName>
    </recommendedName>
</protein>